<comment type="function">
    <text evidence="1">Binds heme and transports it to the liver for breakdown and iron recovery, after which the free hemopexin returns to the circulation.</text>
</comment>
<comment type="subcellular location">
    <subcellularLocation>
        <location evidence="1">Secreted</location>
    </subcellularLocation>
</comment>
<comment type="miscellaneous">
    <text evidence="1">The isolated N-terminal domain binds one heme. The full-length protein also binds one heme, but at a different site. The physiological significance of this is not clear (By similarity).</text>
</comment>
<comment type="similarity">
    <text evidence="3">Belongs to the hemopexin family.</text>
</comment>
<proteinExistence type="evidence at transcript level"/>
<name>HEMO_BOVIN</name>
<organism>
    <name type="scientific">Bos taurus</name>
    <name type="common">Bovine</name>
    <dbReference type="NCBI Taxonomy" id="9913"/>
    <lineage>
        <taxon>Eukaryota</taxon>
        <taxon>Metazoa</taxon>
        <taxon>Chordata</taxon>
        <taxon>Craniata</taxon>
        <taxon>Vertebrata</taxon>
        <taxon>Euteleostomi</taxon>
        <taxon>Mammalia</taxon>
        <taxon>Eutheria</taxon>
        <taxon>Laurasiatheria</taxon>
        <taxon>Artiodactyla</taxon>
        <taxon>Ruminantia</taxon>
        <taxon>Pecora</taxon>
        <taxon>Bovidae</taxon>
        <taxon>Bovinae</taxon>
        <taxon>Bos</taxon>
    </lineage>
</organism>
<evidence type="ECO:0000250" key="1"/>
<evidence type="ECO:0000255" key="2"/>
<evidence type="ECO:0000305" key="3"/>
<keyword id="KW-1015">Disulfide bond</keyword>
<keyword id="KW-0325">Glycoprotein</keyword>
<keyword id="KW-0349">Heme</keyword>
<keyword id="KW-0408">Iron</keyword>
<keyword id="KW-0479">Metal-binding</keyword>
<keyword id="KW-1185">Reference proteome</keyword>
<keyword id="KW-0677">Repeat</keyword>
<keyword id="KW-0964">Secreted</keyword>
<keyword id="KW-0732">Signal</keyword>
<keyword id="KW-0813">Transport</keyword>
<feature type="signal peptide" evidence="1">
    <location>
        <begin position="1"/>
        <end position="23"/>
    </location>
</feature>
<feature type="chain" id="PRO_0000353184" description="Hemopexin">
    <location>
        <begin position="24"/>
        <end position="459"/>
    </location>
</feature>
<feature type="repeat" description="Hemopexin 1">
    <location>
        <begin position="55"/>
        <end position="95"/>
    </location>
</feature>
<feature type="repeat" description="Hemopexin 2">
    <location>
        <begin position="96"/>
        <end position="140"/>
    </location>
</feature>
<feature type="repeat" description="Hemopexin 3">
    <location>
        <begin position="141"/>
        <end position="185"/>
    </location>
</feature>
<feature type="repeat" description="Hemopexin 4">
    <location>
        <begin position="186"/>
        <end position="232"/>
    </location>
</feature>
<feature type="repeat" description="Hemopexin 5">
    <location>
        <begin position="252"/>
        <end position="297"/>
    </location>
</feature>
<feature type="repeat" description="Hemopexin 6">
    <location>
        <begin position="298"/>
        <end position="345"/>
    </location>
</feature>
<feature type="repeat" description="Hemopexin 7">
    <location>
        <begin position="350"/>
        <end position="389"/>
    </location>
</feature>
<feature type="repeat" description="Hemopexin 8">
    <location>
        <begin position="393"/>
        <end position="444"/>
    </location>
</feature>
<feature type="binding site" description="axial binding residue" evidence="1">
    <location>
        <position position="81"/>
    </location>
    <ligand>
        <name>heme</name>
        <dbReference type="ChEBI" id="CHEBI:30413"/>
        <label>1</label>
    </ligand>
    <ligandPart>
        <name>Fe</name>
        <dbReference type="ChEBI" id="CHEBI:18248"/>
    </ligandPart>
</feature>
<feature type="binding site" description="axial binding residue" evidence="1">
    <location>
        <position position="151"/>
    </location>
    <ligand>
        <name>heme</name>
        <dbReference type="ChEBI" id="CHEBI:30413"/>
        <label>1</label>
    </ligand>
    <ligandPart>
        <name>Fe</name>
        <dbReference type="ChEBI" id="CHEBI:18248"/>
    </ligandPart>
</feature>
<feature type="binding site" description="axial binding residue" evidence="1">
    <location>
        <position position="237"/>
    </location>
    <ligand>
        <name>heme</name>
        <dbReference type="ChEBI" id="CHEBI:30413"/>
        <label>2</label>
    </ligand>
    <ligandPart>
        <name>Fe</name>
        <dbReference type="ChEBI" id="CHEBI:18248"/>
    </ligandPart>
</feature>
<feature type="binding site" description="axial binding residue" evidence="1">
    <location>
        <position position="286"/>
    </location>
    <ligand>
        <name>heme</name>
        <dbReference type="ChEBI" id="CHEBI:30413"/>
        <label>2</label>
    </ligand>
    <ligandPart>
        <name>Fe</name>
        <dbReference type="ChEBI" id="CHEBI:18248"/>
    </ligandPart>
</feature>
<feature type="glycosylation site" description="N-linked (GlcNAc...) asparagine" evidence="2">
    <location>
        <position position="188"/>
    </location>
</feature>
<feature type="glycosylation site" description="N-linked (GlcNAc...) asparagine" evidence="2">
    <location>
        <position position="218"/>
    </location>
</feature>
<feature type="glycosylation site" description="N-linked (GlcNAc...) asparagine" evidence="2">
    <location>
        <position position="241"/>
    </location>
</feature>
<feature type="disulfide bond" evidence="1">
    <location>
        <begin position="52"/>
        <end position="232"/>
    </location>
</feature>
<feature type="disulfide bond" evidence="1">
    <location>
        <begin position="150"/>
        <end position="155"/>
    </location>
</feature>
<feature type="disulfide bond" evidence="1">
    <location>
        <begin position="189"/>
        <end position="201"/>
    </location>
</feature>
<feature type="disulfide bond" evidence="1">
    <location>
        <begin position="250"/>
        <end position="453"/>
    </location>
</feature>
<feature type="disulfide bond" evidence="1">
    <location>
        <begin position="359"/>
        <end position="401"/>
    </location>
</feature>
<feature type="disulfide bond" evidence="1">
    <location>
        <begin position="411"/>
        <end position="428"/>
    </location>
</feature>
<protein>
    <recommendedName>
        <fullName>Hemopexin</fullName>
    </recommendedName>
</protein>
<dbReference type="EMBL" id="BC102687">
    <property type="protein sequence ID" value="AAI02688.1"/>
    <property type="molecule type" value="mRNA"/>
</dbReference>
<dbReference type="RefSeq" id="NP_001029784.1">
    <property type="nucleotide sequence ID" value="NM_001034612.2"/>
</dbReference>
<dbReference type="SMR" id="Q3SZV7"/>
<dbReference type="FunCoup" id="Q3SZV7">
    <property type="interactions" value="338"/>
</dbReference>
<dbReference type="STRING" id="9913.ENSBTAP00000004635"/>
<dbReference type="GlyCosmos" id="Q3SZV7">
    <property type="glycosylation" value="3 sites, No reported glycans"/>
</dbReference>
<dbReference type="GlyGen" id="Q3SZV7">
    <property type="glycosylation" value="3 sites"/>
</dbReference>
<dbReference type="PaxDb" id="9913-ENSBTAP00000004635"/>
<dbReference type="PeptideAtlas" id="Q3SZV7"/>
<dbReference type="GeneID" id="534509"/>
<dbReference type="KEGG" id="bta:534509"/>
<dbReference type="CTD" id="3263"/>
<dbReference type="eggNOG" id="KOG1565">
    <property type="taxonomic scope" value="Eukaryota"/>
</dbReference>
<dbReference type="HOGENOM" id="CLU_061713_0_0_1"/>
<dbReference type="InParanoid" id="Q3SZV7"/>
<dbReference type="OrthoDB" id="8953614at2759"/>
<dbReference type="TreeFam" id="TF331201"/>
<dbReference type="Proteomes" id="UP000009136">
    <property type="component" value="Unplaced"/>
</dbReference>
<dbReference type="GO" id="GO:0005615">
    <property type="term" value="C:extracellular space"/>
    <property type="evidence" value="ECO:0000318"/>
    <property type="project" value="GO_Central"/>
</dbReference>
<dbReference type="GO" id="GO:0015232">
    <property type="term" value="F:heme transmembrane transporter activity"/>
    <property type="evidence" value="ECO:0007669"/>
    <property type="project" value="InterPro"/>
</dbReference>
<dbReference type="GO" id="GO:0046872">
    <property type="term" value="F:metal ion binding"/>
    <property type="evidence" value="ECO:0007669"/>
    <property type="project" value="UniProtKB-KW"/>
</dbReference>
<dbReference type="GO" id="GO:0042168">
    <property type="term" value="P:heme metabolic process"/>
    <property type="evidence" value="ECO:0000318"/>
    <property type="project" value="GO_Central"/>
</dbReference>
<dbReference type="GO" id="GO:0006879">
    <property type="term" value="P:intracellular iron ion homeostasis"/>
    <property type="evidence" value="ECO:0007669"/>
    <property type="project" value="InterPro"/>
</dbReference>
<dbReference type="CDD" id="cd00094">
    <property type="entry name" value="HX"/>
    <property type="match status" value="2"/>
</dbReference>
<dbReference type="FunFam" id="2.110.10.10:FF:000009">
    <property type="entry name" value="Hemopexin"/>
    <property type="match status" value="1"/>
</dbReference>
<dbReference type="FunFam" id="2.110.10.10:FF:000013">
    <property type="entry name" value="Hemopexin"/>
    <property type="match status" value="1"/>
</dbReference>
<dbReference type="Gene3D" id="2.110.10.10">
    <property type="entry name" value="Hemopexin-like domain"/>
    <property type="match status" value="2"/>
</dbReference>
<dbReference type="InterPro" id="IPR051298">
    <property type="entry name" value="Heme_transport/Cell_adhesion"/>
</dbReference>
<dbReference type="InterPro" id="IPR016358">
    <property type="entry name" value="Hemopexin"/>
</dbReference>
<dbReference type="InterPro" id="IPR000585">
    <property type="entry name" value="Hemopexin-like_dom"/>
</dbReference>
<dbReference type="InterPro" id="IPR036375">
    <property type="entry name" value="Hemopexin-like_dom_sf"/>
</dbReference>
<dbReference type="InterPro" id="IPR018487">
    <property type="entry name" value="Hemopexin-like_repeat"/>
</dbReference>
<dbReference type="InterPro" id="IPR018486">
    <property type="entry name" value="Hemopexin_CS"/>
</dbReference>
<dbReference type="PANTHER" id="PTHR22917:SF9">
    <property type="entry name" value="HEMOPEXIN"/>
    <property type="match status" value="1"/>
</dbReference>
<dbReference type="PANTHER" id="PTHR22917">
    <property type="entry name" value="HEMOPEXIN DOMAIN-CONTAINING PROTEIN"/>
    <property type="match status" value="1"/>
</dbReference>
<dbReference type="Pfam" id="PF00045">
    <property type="entry name" value="Hemopexin"/>
    <property type="match status" value="3"/>
</dbReference>
<dbReference type="PIRSF" id="PIRSF002551">
    <property type="entry name" value="Hemopexin_chordata"/>
    <property type="match status" value="1"/>
</dbReference>
<dbReference type="SMART" id="SM00120">
    <property type="entry name" value="HX"/>
    <property type="match status" value="6"/>
</dbReference>
<dbReference type="SUPFAM" id="SSF50923">
    <property type="entry name" value="Hemopexin-like domain"/>
    <property type="match status" value="2"/>
</dbReference>
<dbReference type="PROSITE" id="PS00024">
    <property type="entry name" value="HEMOPEXIN"/>
    <property type="match status" value="2"/>
</dbReference>
<dbReference type="PROSITE" id="PS51642">
    <property type="entry name" value="HEMOPEXIN_2"/>
    <property type="match status" value="8"/>
</dbReference>
<accession>Q3SZV7</accession>
<sequence length="459" mass="52209">MARALRVPVALWLLGLCWSLAKAHPLARAPELGHGVEGGNVAKPDPEVTERCSDGWGFDATTLDEHGNMLFLKGEFVWKGHAWARQLISERWKDAPSPVDAAFRYDRNSVLLIKGDKFWVYPPEKGEEYPKLLQEKFPGIPFPLDAAVECHRGECSHEGVFFFQGNHTWFWDFSTKTIKKRSWPAVGNCSSAIRWLNRYYCFRGNKFLRFDPVTGEVNSTYPRDVRDYFMSCPNRGHAHRNATQHMDKRCSPHLVLSALLSDNHSATYAFSENHYWRLDSSRDGWHSWRIEHLWPQGPSTVDAAFLWDKKLYLIQGTQVYIFLTRAGYTLVKDYPKQLEKEFGSPDGVCLHSVDAAFTCPGSSQLYIMAGQKLWRLDLNLGAQATWTELPWLHTKVDGALCTEKSLGPHSCSANGLGLYLVQGPNLYCYKDVEELSKTKDLPQAQRMNSLLGCAPHQHS</sequence>
<gene>
    <name type="primary">HPX</name>
</gene>
<reference key="1">
    <citation type="submission" date="2005-08" db="EMBL/GenBank/DDBJ databases">
        <authorList>
            <consortium name="NIH - Mammalian Gene Collection (MGC) project"/>
        </authorList>
    </citation>
    <scope>NUCLEOTIDE SEQUENCE [LARGE SCALE MRNA]</scope>
    <source>
        <strain>Hereford</strain>
        <tissue>Testis</tissue>
    </source>
</reference>